<gene>
    <name evidence="1" type="primary">cemA</name>
</gene>
<geneLocation type="chloroplast"/>
<proteinExistence type="inferred from homology"/>
<comment type="function">
    <text evidence="1">Contributes to K(+)/H(+) antiport activity by supporting proton efflux to control proton extrusion and homeostasis in chloroplasts in a light-dependent manner to modulate photosynthesis. Prevents excessive induction of non-photochemical quenching (NPQ) under continuous-light conditions. Indirectly promotes efficient inorganic carbon uptake into chloroplasts.</text>
</comment>
<comment type="catalytic activity">
    <reaction evidence="1">
        <text>K(+)(in) + H(+)(out) = K(+)(out) + H(+)(in)</text>
        <dbReference type="Rhea" id="RHEA:29467"/>
        <dbReference type="ChEBI" id="CHEBI:15378"/>
        <dbReference type="ChEBI" id="CHEBI:29103"/>
    </reaction>
</comment>
<comment type="subcellular location">
    <subcellularLocation>
        <location evidence="1">Plastid</location>
        <location evidence="1">Chloroplast inner membrane</location>
        <topology evidence="1">Multi-pass membrane protein</topology>
    </subcellularLocation>
</comment>
<comment type="similarity">
    <text evidence="1 2">Belongs to the CemA family.</text>
</comment>
<evidence type="ECO:0000255" key="1">
    <source>
        <dbReference type="HAMAP-Rule" id="MF_01308"/>
    </source>
</evidence>
<evidence type="ECO:0000305" key="2"/>
<sequence>MPKKKAFTPLPYLASIVFLPWWISLSFNKSLESWITNWWNTRQSEIFLNDIQEKNVLEKFIELEELFLLDEMIKEYPETHIQKLRIGIHKETIELVKIHNEGHIHTILHFSTNITCFAILSGYSILGNEELVILNSWLQEFLYNLSDTIKAFSILLLTDLCIGFHSPHGWELMISSVYRDFGFAHNDPIISGLVSTFPVILDTIFKYWIFRYLNRVSPSLVVIYHSMND</sequence>
<reference key="1">
    <citation type="journal article" date="2006" name="BMC Plant Biol.">
        <title>Rapid and accurate pyrosequencing of angiosperm plastid genomes.</title>
        <authorList>
            <person name="Moore M.J."/>
            <person name="Dhingra A."/>
            <person name="Soltis P.S."/>
            <person name="Shaw R."/>
            <person name="Farmerie W.G."/>
            <person name="Folta K.M."/>
            <person name="Soltis D.E."/>
        </authorList>
    </citation>
    <scope>NUCLEOTIDE SEQUENCE [LARGE SCALE GENOMIC DNA]</scope>
</reference>
<keyword id="KW-0050">Antiport</keyword>
<keyword id="KW-0150">Chloroplast</keyword>
<keyword id="KW-0375">Hydrogen ion transport</keyword>
<keyword id="KW-0406">Ion transport</keyword>
<keyword id="KW-0472">Membrane</keyword>
<keyword id="KW-0934">Plastid</keyword>
<keyword id="KW-1001">Plastid inner membrane</keyword>
<keyword id="KW-0630">Potassium</keyword>
<keyword id="KW-0633">Potassium transport</keyword>
<keyword id="KW-0812">Transmembrane</keyword>
<keyword id="KW-1133">Transmembrane helix</keyword>
<keyword id="KW-0813">Transport</keyword>
<organism>
    <name type="scientific">Platanus occidentalis</name>
    <name type="common">Sycamore</name>
    <name type="synonym">American plane tree</name>
    <dbReference type="NCBI Taxonomy" id="4403"/>
    <lineage>
        <taxon>Eukaryota</taxon>
        <taxon>Viridiplantae</taxon>
        <taxon>Streptophyta</taxon>
        <taxon>Embryophyta</taxon>
        <taxon>Tracheophyta</taxon>
        <taxon>Spermatophyta</taxon>
        <taxon>Magnoliopsida</taxon>
        <taxon>Proteales</taxon>
        <taxon>Platanaceae</taxon>
        <taxon>Platanus</taxon>
    </lineage>
</organism>
<accession>Q09G34</accession>
<dbReference type="EMBL" id="DQ923116">
    <property type="protein sequence ID" value="ABI49790.1"/>
    <property type="molecule type" value="Genomic_DNA"/>
</dbReference>
<dbReference type="RefSeq" id="YP_740577.1">
    <property type="nucleotide sequence ID" value="NC_008335.1"/>
</dbReference>
<dbReference type="GeneID" id="4271302"/>
<dbReference type="GO" id="GO:0009706">
    <property type="term" value="C:chloroplast inner membrane"/>
    <property type="evidence" value="ECO:0007669"/>
    <property type="project" value="UniProtKB-SubCell"/>
</dbReference>
<dbReference type="GO" id="GO:0015297">
    <property type="term" value="F:antiporter activity"/>
    <property type="evidence" value="ECO:0007669"/>
    <property type="project" value="UniProtKB-KW"/>
</dbReference>
<dbReference type="GO" id="GO:0015078">
    <property type="term" value="F:proton transmembrane transporter activity"/>
    <property type="evidence" value="ECO:0007669"/>
    <property type="project" value="UniProtKB-UniRule"/>
</dbReference>
<dbReference type="GO" id="GO:0006813">
    <property type="term" value="P:potassium ion transport"/>
    <property type="evidence" value="ECO:0007669"/>
    <property type="project" value="UniProtKB-UniRule"/>
</dbReference>
<dbReference type="HAMAP" id="MF_01308">
    <property type="entry name" value="CemA_PxcA"/>
    <property type="match status" value="1"/>
</dbReference>
<dbReference type="InterPro" id="IPR004282">
    <property type="entry name" value="CemA"/>
</dbReference>
<dbReference type="PANTHER" id="PTHR33650:SF2">
    <property type="entry name" value="CHLOROPLAST ENVELOPE MEMBRANE PROTEIN"/>
    <property type="match status" value="1"/>
</dbReference>
<dbReference type="PANTHER" id="PTHR33650">
    <property type="entry name" value="CHLOROPLAST ENVELOPE MEMBRANE PROTEIN-RELATED"/>
    <property type="match status" value="1"/>
</dbReference>
<dbReference type="Pfam" id="PF03040">
    <property type="entry name" value="CemA"/>
    <property type="match status" value="1"/>
</dbReference>
<name>CEMA_PLAOC</name>
<protein>
    <recommendedName>
        <fullName evidence="1">Potassium/proton antiporter CemA</fullName>
    </recommendedName>
    <alternativeName>
        <fullName evidence="1">Chloroplast envelope membrane protein A</fullName>
        <shortName evidence="1">CemA</shortName>
    </alternativeName>
</protein>
<feature type="chain" id="PRO_0000293529" description="Potassium/proton antiporter CemA">
    <location>
        <begin position="1"/>
        <end position="229"/>
    </location>
</feature>
<feature type="transmembrane region" description="Helical" evidence="1">
    <location>
        <begin position="7"/>
        <end position="27"/>
    </location>
</feature>
<feature type="transmembrane region" description="Helical" evidence="1">
    <location>
        <begin position="114"/>
        <end position="134"/>
    </location>
</feature>
<feature type="transmembrane region" description="Helical" evidence="1">
    <location>
        <begin position="154"/>
        <end position="174"/>
    </location>
</feature>
<feature type="transmembrane region" description="Helical" evidence="1">
    <location>
        <begin position="189"/>
        <end position="209"/>
    </location>
</feature>